<organism>
    <name type="scientific">Pseudomonas aeruginosa (strain ATCC 15692 / DSM 22644 / CIP 104116 / JCM 14847 / LMG 12228 / 1C / PRS 101 / PAO1)</name>
    <dbReference type="NCBI Taxonomy" id="208964"/>
    <lineage>
        <taxon>Bacteria</taxon>
        <taxon>Pseudomonadati</taxon>
        <taxon>Pseudomonadota</taxon>
        <taxon>Gammaproteobacteria</taxon>
        <taxon>Pseudomonadales</taxon>
        <taxon>Pseudomonadaceae</taxon>
        <taxon>Pseudomonas</taxon>
    </lineage>
</organism>
<gene>
    <name evidence="4" type="ordered locus">PA1342</name>
</gene>
<dbReference type="EMBL" id="AE004091">
    <property type="protein sequence ID" value="AAG04731.1"/>
    <property type="molecule type" value="Genomic_DNA"/>
</dbReference>
<dbReference type="PIR" id="H83478">
    <property type="entry name" value="H83478"/>
</dbReference>
<dbReference type="RefSeq" id="NP_250033.1">
    <property type="nucleotide sequence ID" value="NC_002516.2"/>
</dbReference>
<dbReference type="RefSeq" id="WP_003082770.1">
    <property type="nucleotide sequence ID" value="NZ_QZGE01000005.1"/>
</dbReference>
<dbReference type="SMR" id="Q9I402"/>
<dbReference type="FunCoup" id="Q9I402">
    <property type="interactions" value="226"/>
</dbReference>
<dbReference type="STRING" id="208964.PA1342"/>
<dbReference type="TCDB" id="3.A.1.3.22">
    <property type="family name" value="the atp-binding cassette (abc) superfamily"/>
</dbReference>
<dbReference type="PaxDb" id="208964-PA1342"/>
<dbReference type="DNASU" id="879321"/>
<dbReference type="GeneID" id="879321"/>
<dbReference type="KEGG" id="pae:PA1342"/>
<dbReference type="PATRIC" id="fig|208964.12.peg.1394"/>
<dbReference type="PseudoCAP" id="PA1342"/>
<dbReference type="HOGENOM" id="CLU_019602_0_0_6"/>
<dbReference type="InParanoid" id="Q9I402"/>
<dbReference type="OrthoDB" id="7240770at2"/>
<dbReference type="PhylomeDB" id="Q9I402"/>
<dbReference type="BioCyc" id="PAER208964:G1FZ6-1368-MONOMER"/>
<dbReference type="Proteomes" id="UP000002438">
    <property type="component" value="Chromosome"/>
</dbReference>
<dbReference type="GO" id="GO:0005576">
    <property type="term" value="C:extracellular region"/>
    <property type="evidence" value="ECO:0000318"/>
    <property type="project" value="GO_Central"/>
</dbReference>
<dbReference type="GO" id="GO:0005615">
    <property type="term" value="C:extracellular space"/>
    <property type="evidence" value="ECO:0000314"/>
    <property type="project" value="PseudoCAP"/>
</dbReference>
<dbReference type="GO" id="GO:0030288">
    <property type="term" value="C:outer membrane-bounded periplasmic space"/>
    <property type="evidence" value="ECO:0000318"/>
    <property type="project" value="GO_Central"/>
</dbReference>
<dbReference type="GO" id="GO:0006865">
    <property type="term" value="P:amino acid transport"/>
    <property type="evidence" value="ECO:0000318"/>
    <property type="project" value="GO_Central"/>
</dbReference>
<dbReference type="GO" id="GO:0042940">
    <property type="term" value="P:D-amino acid transport"/>
    <property type="evidence" value="ECO:0000315"/>
    <property type="project" value="PseudoCAP"/>
</dbReference>
<dbReference type="CDD" id="cd13688">
    <property type="entry name" value="PBP2_GltI_DEBP"/>
    <property type="match status" value="1"/>
</dbReference>
<dbReference type="FunFam" id="3.40.190.10:FF:000052">
    <property type="entry name" value="Amino acid ABC transporter substrate-binding protein"/>
    <property type="match status" value="1"/>
</dbReference>
<dbReference type="Gene3D" id="3.40.190.10">
    <property type="entry name" value="Periplasmic binding protein-like II"/>
    <property type="match status" value="2"/>
</dbReference>
<dbReference type="InterPro" id="IPR051455">
    <property type="entry name" value="Bact_solute-bind_prot3"/>
</dbReference>
<dbReference type="InterPro" id="IPR001638">
    <property type="entry name" value="Solute-binding_3/MltF_N"/>
</dbReference>
<dbReference type="NCBIfam" id="NF008063">
    <property type="entry name" value="PRK10797.1"/>
    <property type="match status" value="1"/>
</dbReference>
<dbReference type="PANTHER" id="PTHR30085">
    <property type="entry name" value="AMINO ACID ABC TRANSPORTER PERMEASE"/>
    <property type="match status" value="1"/>
</dbReference>
<dbReference type="PANTHER" id="PTHR30085:SF2">
    <property type="entry name" value="GLUTAMATE_ASPARTATE IMPORT SOLUTE-BINDING PROTEIN"/>
    <property type="match status" value="1"/>
</dbReference>
<dbReference type="Pfam" id="PF00497">
    <property type="entry name" value="SBP_bac_3"/>
    <property type="match status" value="1"/>
</dbReference>
<dbReference type="SMART" id="SM00062">
    <property type="entry name" value="PBPb"/>
    <property type="match status" value="1"/>
</dbReference>
<dbReference type="SUPFAM" id="SSF53850">
    <property type="entry name" value="Periplasmic binding protein-like II"/>
    <property type="match status" value="1"/>
</dbReference>
<evidence type="ECO:0000255" key="1"/>
<evidence type="ECO:0000269" key="2">
    <source>
    </source>
</evidence>
<evidence type="ECO:0000305" key="3"/>
<evidence type="ECO:0000312" key="4">
    <source>
        <dbReference type="EMBL" id="AAG04731.1"/>
    </source>
</evidence>
<keyword id="KW-0029">Amino-acid transport</keyword>
<keyword id="KW-0574">Periplasm</keyword>
<keyword id="KW-1185">Reference proteome</keyword>
<keyword id="KW-0732">Signal</keyword>
<keyword id="KW-0813">Transport</keyword>
<protein>
    <recommendedName>
        <fullName evidence="3">L-glutamate/L-aspartate-binding protein</fullName>
    </recommendedName>
</protein>
<feature type="signal peptide" evidence="1">
    <location>
        <begin position="1"/>
        <end position="23"/>
    </location>
</feature>
<feature type="chain" id="PRO_5004327455" description="L-glutamate/L-aspartate-binding protein" evidence="1">
    <location>
        <begin position="24"/>
        <end position="302"/>
    </location>
</feature>
<proteinExistence type="evidence at protein level"/>
<name>GASBP_PSEAE</name>
<comment type="function">
    <text evidence="2">Binds L-glutamate and L-aspartate.</text>
</comment>
<comment type="subcellular location">
    <subcellularLocation>
        <location evidence="3">Periplasm</location>
    </subcellularLocation>
</comment>
<comment type="similarity">
    <text evidence="3">Belongs to the bacterial solute-binding protein 3 family.</text>
</comment>
<sequence length="302" mass="33054">MRIAPSLLSTAIVAALLSAPVVADELTGTLKKIKETGTITLGHRDASIPFSYLGTEPGKPIGYSHDLQLKVVEAVKKELNLPELKVRYNLVTSQTRIPLVQNGTVDIECGSTTNNEERQKQVDFSVGIFEVGTRLLSKKTANIKDFDDLKGKNVVTTAGTTSERLLKAMNADKKMGMNIISAKDHGESFMMLESGRAVAFMMDDALLYGEMAKAKKPDDWVVGGTPQSFEIYGCMVRKGDAAFKKVVDKAITDTYASGEVNKIYDKWFTQPIPPKGLNLNFPMSEELKKLIASPTDKAAEQM</sequence>
<reference key="1">
    <citation type="journal article" date="2000" name="Nature">
        <title>Complete genome sequence of Pseudomonas aeruginosa PAO1, an opportunistic pathogen.</title>
        <authorList>
            <person name="Stover C.K."/>
            <person name="Pham X.-Q.T."/>
            <person name="Erwin A.L."/>
            <person name="Mizoguchi S.D."/>
            <person name="Warrener P."/>
            <person name="Hickey M.J."/>
            <person name="Brinkman F.S.L."/>
            <person name="Hufnagle W.O."/>
            <person name="Kowalik D.J."/>
            <person name="Lagrou M."/>
            <person name="Garber R.L."/>
            <person name="Goltry L."/>
            <person name="Tolentino E."/>
            <person name="Westbrock-Wadman S."/>
            <person name="Yuan Y."/>
            <person name="Brody L.L."/>
            <person name="Coulter S.N."/>
            <person name="Folger K.R."/>
            <person name="Kas A."/>
            <person name="Larbig K."/>
            <person name="Lim R.M."/>
            <person name="Smith K.A."/>
            <person name="Spencer D.H."/>
            <person name="Wong G.K.-S."/>
            <person name="Wu Z."/>
            <person name="Paulsen I.T."/>
            <person name="Reizer J."/>
            <person name="Saier M.H. Jr."/>
            <person name="Hancock R.E.W."/>
            <person name="Lory S."/>
            <person name="Olson M.V."/>
        </authorList>
    </citation>
    <scope>NUCLEOTIDE SEQUENCE [LARGE SCALE GENOMIC DNA]</scope>
    <source>
        <strain>ATCC 15692 / DSM 22644 / CIP 104116 / JCM 14847 / LMG 12228 / 1C / PRS 101 / PAO1</strain>
    </source>
</reference>
<reference key="2">
    <citation type="journal article" date="2019" name="Int. J. Mol. Sci.">
        <title>Determination of Ligand Profiles for Pseudomonas aeruginosa Solute Binding Proteins.</title>
        <authorList>
            <person name="Fernandez M."/>
            <person name="Rico-Jimenez M."/>
            <person name="Ortega A."/>
            <person name="Daddaoua A."/>
            <person name="Garcia Garcia A.I."/>
            <person name="Martin-Mora D."/>
            <person name="Torres N.M."/>
            <person name="Tajuelo A."/>
            <person name="Matilla M.A."/>
            <person name="Krell T."/>
        </authorList>
    </citation>
    <scope>FUNCTION AS A BINDING PROTEIN</scope>
    <source>
        <strain>ATCC 15692 / DSM 22644 / CIP 104116 / JCM 14847 / LMG 12228 / 1C / PRS 101 / PAO1</strain>
    </source>
</reference>
<accession>Q9I402</accession>